<keyword id="KW-0963">Cytoplasm</keyword>
<keyword id="KW-0489">Methyltransferase</keyword>
<keyword id="KW-0949">S-adenosyl-L-methionine</keyword>
<keyword id="KW-0808">Transferase</keyword>
<keyword id="KW-0819">tRNA processing</keyword>
<comment type="function">
    <text evidence="1">Specifically methylates the adenine in position 37 of tRNA(1)(Val) (anticodon cmo5UAC).</text>
</comment>
<comment type="catalytic activity">
    <reaction evidence="1">
        <text>adenosine(37) in tRNA1(Val) + S-adenosyl-L-methionine = N(6)-methyladenosine(37) in tRNA1(Val) + S-adenosyl-L-homocysteine + H(+)</text>
        <dbReference type="Rhea" id="RHEA:43160"/>
        <dbReference type="Rhea" id="RHEA-COMP:10369"/>
        <dbReference type="Rhea" id="RHEA-COMP:10370"/>
        <dbReference type="ChEBI" id="CHEBI:15378"/>
        <dbReference type="ChEBI" id="CHEBI:57856"/>
        <dbReference type="ChEBI" id="CHEBI:59789"/>
        <dbReference type="ChEBI" id="CHEBI:74411"/>
        <dbReference type="ChEBI" id="CHEBI:74449"/>
        <dbReference type="EC" id="2.1.1.223"/>
    </reaction>
</comment>
<comment type="subcellular location">
    <subcellularLocation>
        <location evidence="1">Cytoplasm</location>
    </subcellularLocation>
</comment>
<comment type="similarity">
    <text evidence="1">Belongs to the methyltransferase superfamily. tRNA (adenine-N(6)-)-methyltransferase family.</text>
</comment>
<dbReference type="EC" id="2.1.1.223" evidence="1"/>
<dbReference type="EMBL" id="CP000819">
    <property type="protein sequence ID" value="ACT40122.1"/>
    <property type="molecule type" value="Genomic_DNA"/>
</dbReference>
<dbReference type="SMR" id="C6UBI3"/>
<dbReference type="KEGG" id="ebr:ECB_02469"/>
<dbReference type="HOGENOM" id="CLU_061983_0_0_6"/>
<dbReference type="BioCyc" id="ECOL413997:GCQD-2682-MONOMER"/>
<dbReference type="GO" id="GO:0005737">
    <property type="term" value="C:cytoplasm"/>
    <property type="evidence" value="ECO:0007669"/>
    <property type="project" value="UniProtKB-SubCell"/>
</dbReference>
<dbReference type="GO" id="GO:0003676">
    <property type="term" value="F:nucleic acid binding"/>
    <property type="evidence" value="ECO:0007669"/>
    <property type="project" value="InterPro"/>
</dbReference>
<dbReference type="GO" id="GO:0016430">
    <property type="term" value="F:tRNA (adenine-N6)-methyltransferase activity"/>
    <property type="evidence" value="ECO:0007669"/>
    <property type="project" value="UniProtKB-UniRule"/>
</dbReference>
<dbReference type="GO" id="GO:0032259">
    <property type="term" value="P:methylation"/>
    <property type="evidence" value="ECO:0007669"/>
    <property type="project" value="UniProtKB-KW"/>
</dbReference>
<dbReference type="GO" id="GO:0008033">
    <property type="term" value="P:tRNA processing"/>
    <property type="evidence" value="ECO:0007669"/>
    <property type="project" value="UniProtKB-UniRule"/>
</dbReference>
<dbReference type="CDD" id="cd02440">
    <property type="entry name" value="AdoMet_MTases"/>
    <property type="match status" value="1"/>
</dbReference>
<dbReference type="FunFam" id="3.40.50.150:FF:000087">
    <property type="entry name" value="tRNA1(Val) (adenine(37)-N6)-methyltransferase"/>
    <property type="match status" value="1"/>
</dbReference>
<dbReference type="Gene3D" id="3.40.50.150">
    <property type="entry name" value="Vaccinia Virus protein VP39"/>
    <property type="match status" value="1"/>
</dbReference>
<dbReference type="HAMAP" id="MF_01872">
    <property type="entry name" value="tRNA_methyltr_YfiC"/>
    <property type="match status" value="1"/>
</dbReference>
<dbReference type="InterPro" id="IPR002052">
    <property type="entry name" value="DNA_methylase_N6_adenine_CS"/>
</dbReference>
<dbReference type="InterPro" id="IPR029063">
    <property type="entry name" value="SAM-dependent_MTases_sf"/>
</dbReference>
<dbReference type="InterPro" id="IPR007848">
    <property type="entry name" value="Small_mtfrase_dom"/>
</dbReference>
<dbReference type="InterPro" id="IPR050210">
    <property type="entry name" value="tRNA_Adenine-N(6)_MTase"/>
</dbReference>
<dbReference type="InterPro" id="IPR022882">
    <property type="entry name" value="tRNA_adenine-N6_MeTrfase"/>
</dbReference>
<dbReference type="NCBIfam" id="NF047853">
    <property type="entry name" value="tRm6a37MtseTrmN"/>
    <property type="match status" value="1"/>
</dbReference>
<dbReference type="PANTHER" id="PTHR47739">
    <property type="entry name" value="TRNA1(VAL) (ADENINE(37)-N6)-METHYLTRANSFERASE"/>
    <property type="match status" value="1"/>
</dbReference>
<dbReference type="PANTHER" id="PTHR47739:SF1">
    <property type="entry name" value="TRNA1(VAL) (ADENINE(37)-N6)-METHYLTRANSFERASE"/>
    <property type="match status" value="1"/>
</dbReference>
<dbReference type="Pfam" id="PF05175">
    <property type="entry name" value="MTS"/>
    <property type="match status" value="1"/>
</dbReference>
<dbReference type="SUPFAM" id="SSF53335">
    <property type="entry name" value="S-adenosyl-L-methionine-dependent methyltransferases"/>
    <property type="match status" value="1"/>
</dbReference>
<dbReference type="PROSITE" id="PS00092">
    <property type="entry name" value="N6_MTASE"/>
    <property type="match status" value="1"/>
</dbReference>
<reference key="1">
    <citation type="journal article" date="2009" name="J. Mol. Biol.">
        <title>Genome sequences of Escherichia coli B strains REL606 and BL21(DE3).</title>
        <authorList>
            <person name="Jeong H."/>
            <person name="Barbe V."/>
            <person name="Lee C.H."/>
            <person name="Vallenet D."/>
            <person name="Yu D.S."/>
            <person name="Choi S.H."/>
            <person name="Couloux A."/>
            <person name="Lee S.W."/>
            <person name="Yoon S.H."/>
            <person name="Cattolico L."/>
            <person name="Hur C.G."/>
            <person name="Park H.S."/>
            <person name="Segurens B."/>
            <person name="Kim S.C."/>
            <person name="Oh T.K."/>
            <person name="Lenski R.E."/>
            <person name="Studier F.W."/>
            <person name="Daegelen P."/>
            <person name="Kim J.F."/>
        </authorList>
    </citation>
    <scope>NUCLEOTIDE SEQUENCE [LARGE SCALE GENOMIC DNA]</scope>
    <source>
        <strain>B / REL606</strain>
    </source>
</reference>
<feature type="chain" id="PRO_0000387358" description="tRNA1(Val) (adenine(37)-N6)-methyltransferase">
    <location>
        <begin position="1"/>
        <end position="245"/>
    </location>
</feature>
<evidence type="ECO:0000255" key="1">
    <source>
        <dbReference type="HAMAP-Rule" id="MF_01872"/>
    </source>
</evidence>
<accession>C6UBI3</accession>
<sequence length="245" mass="27270">MSQSTSVLRRNGFTFKQFFVAHDRCAMKVGTDGILLGAWAPVAGVKRCLDIGAGSGLLALMLAQRTDDSVMIDAVELESEAAAQAQENINQSPWAERINVHTADIQQWITQQTVRFDLIISNPPYYQQGVECSTPQREQARYTTTLDHPSLLTCAAECITEEGFFCVVLPEQIGNGFTELALSMGWHLRLRTDVAENEARLPHRVLLAFSPQAGECFSDRLVIRGPDQNYSEAYTALTQAFYLFM</sequence>
<proteinExistence type="inferred from homology"/>
<organism>
    <name type="scientific">Escherichia coli (strain B / REL606)</name>
    <dbReference type="NCBI Taxonomy" id="413997"/>
    <lineage>
        <taxon>Bacteria</taxon>
        <taxon>Pseudomonadati</taxon>
        <taxon>Pseudomonadota</taxon>
        <taxon>Gammaproteobacteria</taxon>
        <taxon>Enterobacterales</taxon>
        <taxon>Enterobacteriaceae</taxon>
        <taxon>Escherichia</taxon>
    </lineage>
</organism>
<protein>
    <recommendedName>
        <fullName evidence="1">tRNA1(Val) (adenine(37)-N6)-methyltransferase</fullName>
        <ecNumber evidence="1">2.1.1.223</ecNumber>
    </recommendedName>
    <alternativeName>
        <fullName evidence="1">tRNA m6A37 methyltransferase</fullName>
    </alternativeName>
</protein>
<name>TRMN6_ECOBR</name>
<gene>
    <name evidence="1" type="primary">yfiC</name>
    <name type="ordered locus">ECB_02469</name>
</gene>